<comment type="function">
    <text evidence="1">Forms an efflux pump with AaeA. Could function as a metabolic relief valve, allowing to eliminate certain compounds when they accumulate to high levels in the cell.</text>
</comment>
<comment type="subcellular location">
    <subcellularLocation>
        <location evidence="1">Cell inner membrane</location>
        <topology evidence="1">Multi-pass membrane protein</topology>
    </subcellularLocation>
</comment>
<comment type="similarity">
    <text evidence="1">Belongs to the aromatic acid exporter ArAE (TC 2.A.85) family.</text>
</comment>
<name>AAEB_SALEP</name>
<organism>
    <name type="scientific">Salmonella enteritidis PT4 (strain P125109)</name>
    <dbReference type="NCBI Taxonomy" id="550537"/>
    <lineage>
        <taxon>Bacteria</taxon>
        <taxon>Pseudomonadati</taxon>
        <taxon>Pseudomonadota</taxon>
        <taxon>Gammaproteobacteria</taxon>
        <taxon>Enterobacterales</taxon>
        <taxon>Enterobacteriaceae</taxon>
        <taxon>Salmonella</taxon>
    </lineage>
</organism>
<sequence length="655" mass="73650">MGIFSIANQHIRFAVKLACAIVLALFIGFHFQLETPRWAVLTAAIVAAGPAFAAGGEPYSGAIRYRGMLRIIGTFIGCIAALIIIISMIRAPLLMILVCCVWAGFCTWISSLVRIENSYAWGLSGYTALIIVITIQTEPLLTPQFALERCSEIVIGIGCAILADLLFSPRSIKQEVDRELDSLLVAQYQLMQLCIKHGDSEEVDNAWGDLVRRTAALEGMRSNLNMESSRWVRANRRLKALNTLSLTLITQSCETYLIQNTRPELITDTFRELFETPVETVQDVHRQLKRMRRVIVWTGERETPVTLYSWVGAATRYLLLKRGVISNTKISATEEEILQGEPVVKVESAERHHAMVNFWRTTLSCILGTLFWLWTGWTSGNGAMVMIAVVTSLAMRLPNPRMVCIDFIYGTLAALPLGLLYFLVIIPNTQQSMLLLCLSLAVLGFFIGIEVQKRRLGSMGALASTINIIVLDNPMTFHFSQFLDSALGQIVGCMLAFIVILLVRDKSKDRTGRVLLNQFVSAAVSAMTTNVVRRKENRLPALYQQLFLLMNKFPGDLPKFRLALTMIIAHQRLRDAPIPVNEDLSVFHRQLRRTADHVISAGSDDKRRRYFGQLLDELDIYQEKLRIWEAPTQVTEPVKRLTGMLHKYQNALTDS</sequence>
<reference key="1">
    <citation type="journal article" date="2008" name="Genome Res.">
        <title>Comparative genome analysis of Salmonella enteritidis PT4 and Salmonella gallinarum 287/91 provides insights into evolutionary and host adaptation pathways.</title>
        <authorList>
            <person name="Thomson N.R."/>
            <person name="Clayton D.J."/>
            <person name="Windhorst D."/>
            <person name="Vernikos G."/>
            <person name="Davidson S."/>
            <person name="Churcher C."/>
            <person name="Quail M.A."/>
            <person name="Stevens M."/>
            <person name="Jones M.A."/>
            <person name="Watson M."/>
            <person name="Barron A."/>
            <person name="Layton A."/>
            <person name="Pickard D."/>
            <person name="Kingsley R.A."/>
            <person name="Bignell A."/>
            <person name="Clark L."/>
            <person name="Harris B."/>
            <person name="Ormond D."/>
            <person name="Abdellah Z."/>
            <person name="Brooks K."/>
            <person name="Cherevach I."/>
            <person name="Chillingworth T."/>
            <person name="Woodward J."/>
            <person name="Norberczak H."/>
            <person name="Lord A."/>
            <person name="Arrowsmith C."/>
            <person name="Jagels K."/>
            <person name="Moule S."/>
            <person name="Mungall K."/>
            <person name="Saunders M."/>
            <person name="Whitehead S."/>
            <person name="Chabalgoity J.A."/>
            <person name="Maskell D."/>
            <person name="Humphreys T."/>
            <person name="Roberts M."/>
            <person name="Barrow P.A."/>
            <person name="Dougan G."/>
            <person name="Parkhill J."/>
        </authorList>
    </citation>
    <scope>NUCLEOTIDE SEQUENCE [LARGE SCALE GENOMIC DNA]</scope>
    <source>
        <strain>P125109</strain>
    </source>
</reference>
<accession>B5R1A7</accession>
<keyword id="KW-0997">Cell inner membrane</keyword>
<keyword id="KW-1003">Cell membrane</keyword>
<keyword id="KW-0472">Membrane</keyword>
<keyword id="KW-0812">Transmembrane</keyword>
<keyword id="KW-1133">Transmembrane helix</keyword>
<keyword id="KW-0813">Transport</keyword>
<evidence type="ECO:0000255" key="1">
    <source>
        <dbReference type="HAMAP-Rule" id="MF_01545"/>
    </source>
</evidence>
<feature type="chain" id="PRO_1000146742" description="p-hydroxybenzoic acid efflux pump subunit AaeB">
    <location>
        <begin position="1"/>
        <end position="655"/>
    </location>
</feature>
<feature type="transmembrane region" description="Helical" evidence="1">
    <location>
        <begin position="13"/>
        <end position="33"/>
    </location>
</feature>
<feature type="transmembrane region" description="Helical" evidence="1">
    <location>
        <begin position="38"/>
        <end position="58"/>
    </location>
</feature>
<feature type="transmembrane region" description="Helical" evidence="1">
    <location>
        <begin position="69"/>
        <end position="89"/>
    </location>
</feature>
<feature type="transmembrane region" description="Helical" evidence="1">
    <location>
        <begin position="93"/>
        <end position="113"/>
    </location>
</feature>
<feature type="transmembrane region" description="Helical" evidence="1">
    <location>
        <begin position="121"/>
        <end position="141"/>
    </location>
</feature>
<feature type="transmembrane region" description="Helical" evidence="1">
    <location>
        <begin position="152"/>
        <end position="172"/>
    </location>
</feature>
<feature type="transmembrane region" description="Helical" evidence="1">
    <location>
        <begin position="370"/>
        <end position="390"/>
    </location>
</feature>
<feature type="transmembrane region" description="Helical" evidence="1">
    <location>
        <begin position="407"/>
        <end position="427"/>
    </location>
</feature>
<feature type="transmembrane region" description="Helical" evidence="1">
    <location>
        <begin position="431"/>
        <end position="451"/>
    </location>
</feature>
<feature type="transmembrane region" description="Helical" evidence="1">
    <location>
        <begin position="459"/>
        <end position="479"/>
    </location>
</feature>
<feature type="transmembrane region" description="Helical" evidence="1">
    <location>
        <begin position="482"/>
        <end position="502"/>
    </location>
</feature>
<protein>
    <recommendedName>
        <fullName evidence="1">p-hydroxybenzoic acid efflux pump subunit AaeB</fullName>
        <shortName evidence="1">pHBA efflux pump protein B</shortName>
    </recommendedName>
</protein>
<gene>
    <name evidence="1" type="primary">aaeB</name>
    <name type="ordered locus">SEN3197</name>
</gene>
<proteinExistence type="inferred from homology"/>
<dbReference type="EMBL" id="AM933172">
    <property type="protein sequence ID" value="CAR34773.1"/>
    <property type="molecule type" value="Genomic_DNA"/>
</dbReference>
<dbReference type="RefSeq" id="WP_000510914.1">
    <property type="nucleotide sequence ID" value="NC_011294.1"/>
</dbReference>
<dbReference type="SMR" id="B5R1A7"/>
<dbReference type="KEGG" id="set:SEN3197"/>
<dbReference type="HOGENOM" id="CLU_027647_0_0_6"/>
<dbReference type="Proteomes" id="UP000000613">
    <property type="component" value="Chromosome"/>
</dbReference>
<dbReference type="GO" id="GO:0005886">
    <property type="term" value="C:plasma membrane"/>
    <property type="evidence" value="ECO:0007669"/>
    <property type="project" value="UniProtKB-SubCell"/>
</dbReference>
<dbReference type="GO" id="GO:0022857">
    <property type="term" value="F:transmembrane transporter activity"/>
    <property type="evidence" value="ECO:0007669"/>
    <property type="project" value="UniProtKB-UniRule"/>
</dbReference>
<dbReference type="GO" id="GO:0046942">
    <property type="term" value="P:carboxylic acid transport"/>
    <property type="evidence" value="ECO:0007669"/>
    <property type="project" value="InterPro"/>
</dbReference>
<dbReference type="HAMAP" id="MF_01545">
    <property type="entry name" value="AaeB"/>
    <property type="match status" value="1"/>
</dbReference>
<dbReference type="InterPro" id="IPR006726">
    <property type="entry name" value="PHBA_efflux_AaeB/fusaric-R"/>
</dbReference>
<dbReference type="InterPro" id="IPR023706">
    <property type="entry name" value="PHBA_efflux_pump_AaeB"/>
</dbReference>
<dbReference type="NCBIfam" id="NF007916">
    <property type="entry name" value="PRK10631.1"/>
    <property type="match status" value="1"/>
</dbReference>
<dbReference type="PANTHER" id="PTHR30509:SF9">
    <property type="entry name" value="MULTIDRUG RESISTANCE PROTEIN MDTO"/>
    <property type="match status" value="1"/>
</dbReference>
<dbReference type="PANTHER" id="PTHR30509">
    <property type="entry name" value="P-HYDROXYBENZOIC ACID EFFLUX PUMP SUBUNIT-RELATED"/>
    <property type="match status" value="1"/>
</dbReference>
<dbReference type="Pfam" id="PF04632">
    <property type="entry name" value="FUSC"/>
    <property type="match status" value="1"/>
</dbReference>